<evidence type="ECO:0000250" key="1">
    <source>
        <dbReference type="UniProtKB" id="A9XE60"/>
    </source>
</evidence>
<evidence type="ECO:0000255" key="2">
    <source>
        <dbReference type="PROSITE-ProRule" id="PRU01209"/>
    </source>
</evidence>
<evidence type="ECO:0000303" key="3">
    <source>
    </source>
</evidence>
<evidence type="ECO:0000305" key="4"/>
<evidence type="ECO:0000305" key="5">
    <source>
    </source>
</evidence>
<proteinExistence type="inferred from homology"/>
<protein>
    <recommendedName>
        <fullName evidence="5">Potassium channel toxin MeuTXK-beta-2</fullName>
        <shortName evidence="3">MeuTXKbeta2</shortName>
    </recommendedName>
</protein>
<organism>
    <name type="scientific">Mesobuthus eupeus</name>
    <name type="common">Lesser Asian scorpion</name>
    <name type="synonym">Buthus eupeus</name>
    <dbReference type="NCBI Taxonomy" id="34648"/>
    <lineage>
        <taxon>Eukaryota</taxon>
        <taxon>Metazoa</taxon>
        <taxon>Ecdysozoa</taxon>
        <taxon>Arthropoda</taxon>
        <taxon>Chelicerata</taxon>
        <taxon>Arachnida</taxon>
        <taxon>Scorpiones</taxon>
        <taxon>Buthida</taxon>
        <taxon>Buthoidea</taxon>
        <taxon>Buthidae</taxon>
        <taxon>Mesobuthus</taxon>
    </lineage>
</organism>
<comment type="function">
    <text evidence="1">Has a low affinity binding to potassium channels of rat brain synaptosomes. Displays weak antibacterial activity against Stenotrophomonas sp. Strongly inhibits the development of the Plasmodium berghei ookinetes. Displays slight hemolytic effect on mouse erythrocytes. Induces cytolysis on Xenopus oocytes at high concentrations. Is not toxic towards mice and towards the insect Tenebrio molitor.</text>
</comment>
<comment type="subcellular location">
    <subcellularLocation>
        <location evidence="5">Secreted</location>
    </subcellularLocation>
</comment>
<comment type="tissue specificity">
    <text evidence="5">Expressed by the venom gland.</text>
</comment>
<comment type="similarity">
    <text evidence="4">Belongs to the long chain scorpion toxin family. Class 1 subfamily.</text>
</comment>
<name>KBX12_MESEU</name>
<keyword id="KW-0044">Antibiotic</keyword>
<keyword id="KW-0929">Antimicrobial</keyword>
<keyword id="KW-0204">Cytolysis</keyword>
<keyword id="KW-1015">Disulfide bond</keyword>
<keyword id="KW-0354">Hemolysis</keyword>
<keyword id="KW-0872">Ion channel impairing toxin</keyword>
<keyword id="KW-0632">Potassium channel impairing toxin</keyword>
<keyword id="KW-0964">Secreted</keyword>
<keyword id="KW-0732">Signal</keyword>
<keyword id="KW-0800">Toxin</keyword>
<feature type="signal peptide" evidence="1">
    <location>
        <begin position="1"/>
        <end position="19"/>
    </location>
</feature>
<feature type="chain" id="PRO_0000394023" description="Potassium channel toxin MeuTXK-beta-2">
    <location>
        <begin position="20"/>
        <end position="91"/>
    </location>
</feature>
<feature type="domain" description="BetaSPN-type CS-alpha/beta" evidence="2">
    <location>
        <begin position="54"/>
        <end position="91"/>
    </location>
</feature>
<feature type="disulfide bond" evidence="2">
    <location>
        <begin position="57"/>
        <end position="78"/>
    </location>
</feature>
<feature type="disulfide bond" evidence="2">
    <location>
        <begin position="64"/>
        <end position="83"/>
    </location>
</feature>
<feature type="disulfide bond" evidence="2">
    <location>
        <begin position="68"/>
        <end position="85"/>
    </location>
</feature>
<sequence>MQRNLVVLLFLGMVALSSCGFREKHFQRFVKYAVPESTLRTVLQTVVHKVGKTQFGCSAYQGYCDDHCQDIEKKEGFCHGFKCKCGIPMGF</sequence>
<reference key="1">
    <citation type="journal article" date="2010" name="Biochim. Biophys. Acta">
        <title>MeuTXKbeta1, a scorpion venom-derived two-domain potassium channel toxin-like peptide with cytolytic activity.</title>
        <authorList>
            <person name="Zhu S."/>
            <person name="Gao B."/>
            <person name="Aumelas A."/>
            <person name="Del Carmen Rodriguez M."/>
            <person name="Lanz-Mendoza H."/>
            <person name="Peigneur S."/>
            <person name="Diego-Garcia E."/>
            <person name="Martin-Eauclaire M.-F."/>
            <person name="Tytgat J."/>
            <person name="Possani L.D."/>
        </authorList>
    </citation>
    <scope>NUCLEOTIDE SEQUENCE [MRNA]</scope>
    <source>
        <tissue>Venom gland</tissue>
    </source>
</reference>
<dbReference type="EMBL" id="EF190324">
    <property type="protein sequence ID" value="ABP35518.1"/>
    <property type="molecule type" value="mRNA"/>
</dbReference>
<dbReference type="BMRB" id="A9XE59"/>
<dbReference type="SMR" id="A9XE59"/>
<dbReference type="GO" id="GO:0005576">
    <property type="term" value="C:extracellular region"/>
    <property type="evidence" value="ECO:0007669"/>
    <property type="project" value="UniProtKB-SubCell"/>
</dbReference>
<dbReference type="GO" id="GO:0015459">
    <property type="term" value="F:potassium channel regulator activity"/>
    <property type="evidence" value="ECO:0007669"/>
    <property type="project" value="UniProtKB-KW"/>
</dbReference>
<dbReference type="GO" id="GO:0090729">
    <property type="term" value="F:toxin activity"/>
    <property type="evidence" value="ECO:0007669"/>
    <property type="project" value="UniProtKB-KW"/>
</dbReference>
<dbReference type="GO" id="GO:0042742">
    <property type="term" value="P:defense response to bacterium"/>
    <property type="evidence" value="ECO:0007669"/>
    <property type="project" value="UniProtKB-KW"/>
</dbReference>
<dbReference type="GO" id="GO:0031640">
    <property type="term" value="P:killing of cells of another organism"/>
    <property type="evidence" value="ECO:0007669"/>
    <property type="project" value="UniProtKB-KW"/>
</dbReference>
<dbReference type="InterPro" id="IPR029237">
    <property type="entry name" value="Long_scorpion_toxin_alpha/beta"/>
</dbReference>
<dbReference type="Pfam" id="PF14866">
    <property type="entry name" value="Scorpion_toxin_alpha-beta"/>
    <property type="match status" value="1"/>
</dbReference>
<dbReference type="PROSITE" id="PS51862">
    <property type="entry name" value="BSPN_CSAB"/>
    <property type="match status" value="1"/>
</dbReference>
<accession>A9XE59</accession>